<protein>
    <recommendedName>
        <fullName evidence="3">Methyltransferase cfoC</fullName>
        <ecNumber evidence="2">2.1.1.-</ecNumber>
    </recommendedName>
    <alternativeName>
        <fullName evidence="3">Chlorflavonin biosynthesis cluster protein C</fullName>
    </alternativeName>
</protein>
<name>CFOC_ASPCN</name>
<accession>A0A2I2F2K7</accession>
<gene>
    <name evidence="3" type="primary">cfoC</name>
    <name type="ORF">BDW47DRAFT_111387</name>
</gene>
<sequence length="401" mass="45222">MDPEVSKLLATVTSLGETVKKHASTDKESPASRESRRELLSAARQLTNELQNEGQIVEGYLYGTIDPLLLKMGIDLGIFRKLVDSSTPVTLGELMSVSGADEVLLARIMRGLSSIHAVREVGVELYEPNKVTRAFTTVKGQSGLDVFHNINHPGWQSLPECLRATGYRNPTDPAKMWFGRQFNGEPYFDWLGKRPELLSSFHRFMSTQRDGHAHWLDFYPFQQQLLPDFDAGDPDAVFMVDVGGSVGHEIQEVKRRYPGIPGRMVLQDVPATIARVDPENGMEAMAHDFFTPNPIKGARAYYLRNVLHDWDDDRCCVILKHIRDAMTPGYSVLLINEFSIPRKGACSFATHSDFMLMAINAAVERTEQQWYHLMKSVGLQIKKIWTLEPDTESLLEVTRVD</sequence>
<reference key="1">
    <citation type="submission" date="2017-12" db="EMBL/GenBank/DDBJ databases">
        <authorList>
            <consortium name="DOE Joint Genome Institute"/>
            <person name="Haridas S."/>
            <person name="Kjaerbolling I."/>
            <person name="Vesth T.C."/>
            <person name="Frisvad J.C."/>
            <person name="Nybo J.L."/>
            <person name="Theobald S."/>
            <person name="Kuo A."/>
            <person name="Bowyer P."/>
            <person name="Matsuda Y."/>
            <person name="Mondo S."/>
            <person name="Lyhne E.K."/>
            <person name="Kogle M.E."/>
            <person name="Clum A."/>
            <person name="Lipzen A."/>
            <person name="Salamov A."/>
            <person name="Ngan C.Y."/>
            <person name="Daum C."/>
            <person name="Chiniquy J."/>
            <person name="Barry K."/>
            <person name="LaButti K."/>
            <person name="Simmons B.A."/>
            <person name="Magnuson J.K."/>
            <person name="Mortensen U.H."/>
            <person name="Larsen T.O."/>
            <person name="Grigoriev I.V."/>
            <person name="Baker S.E."/>
            <person name="Andersen M.R."/>
            <person name="Nordberg H.P."/>
            <person name="Cantor M.N."/>
            <person name="Hua S.X."/>
        </authorList>
    </citation>
    <scope>NUCLEOTIDE SEQUENCE [LARGE SCALE GENOMIC DNA]</scope>
    <source>
        <strain>CBS 102.13</strain>
    </source>
</reference>
<reference key="2">
    <citation type="journal article" date="2023" name="Angew. Chem. Int. Ed.">
        <title>Discovery of a Unique Flavonoid Biosynthesis Mechanism in Fungi by Genome Mining.</title>
        <authorList>
            <person name="Zhang W."/>
            <person name="Zhang X."/>
            <person name="Feng D."/>
            <person name="Liang Y."/>
            <person name="Wu Z."/>
            <person name="Du S."/>
            <person name="Zhou Y."/>
            <person name="Geng C."/>
            <person name="Men P."/>
            <person name="Fu C."/>
            <person name="Huang X."/>
            <person name="Lu X."/>
        </authorList>
    </citation>
    <scope>FUNCTION</scope>
    <scope>DISRUPTION PHENOTYPE</scope>
    <scope>PATHWAY</scope>
</reference>
<feature type="chain" id="PRO_0000459548" description="Methyltransferase cfoC">
    <location>
        <begin position="1"/>
        <end position="401"/>
    </location>
</feature>
<feature type="active site" description="Proton acceptor" evidence="1">
    <location>
        <position position="308"/>
    </location>
</feature>
<feature type="binding site" evidence="1">
    <location>
        <position position="268"/>
    </location>
    <ligand>
        <name>S-adenosyl-L-methionine</name>
        <dbReference type="ChEBI" id="CHEBI:59789"/>
    </ligand>
</feature>
<proteinExistence type="inferred from homology"/>
<keyword id="KW-0284">Flavonoid biosynthesis</keyword>
<keyword id="KW-0489">Methyltransferase</keyword>
<keyword id="KW-1185">Reference proteome</keyword>
<keyword id="KW-0949">S-adenosyl-L-methionine</keyword>
<keyword id="KW-0808">Transferase</keyword>
<evidence type="ECO:0000255" key="1">
    <source>
        <dbReference type="PROSITE-ProRule" id="PRU01020"/>
    </source>
</evidence>
<evidence type="ECO:0000269" key="2">
    <source>
    </source>
</evidence>
<evidence type="ECO:0000303" key="3">
    <source>
    </source>
</evidence>
<evidence type="ECO:0000305" key="4"/>
<comment type="function">
    <text evidence="2">Methyltransferase; part of the gene cluster that mediates the biosynthesis of chlorflavonin, a fungal flavonoid with acetolactate synthase inhibitory activity (PubMed:36704842). Within the pathway, cfoC is responsible for the methylation at position C8-OH of flavonoid (PubMed:36704842). The pathway begins with the PKS-NRPS hybrid synthetase cfoA that uses benzoic acid or p-hydroxybenzoic acid as a starter unit with four rounds of chain elongation using malonyl-CoA to form the chalcone skeleton. Then, a new type of chalcone isomerase, cfoK, catalyzes the conversion of the chalcone into a flavanone by a histidine-mediated oxa-Michael addition mechanism. The desaturation of flavanone to flavone is catalyzed by a new type of flavone synthase, the flavin mononucleotide (FMN)-dependent oxidoreductase cfoJ. Monooxygenases cfoF, cfoG, and P450 cfoH are responsible for the hydroxylation of the flavonoid skeleton at sites C3, C8, and C2', respectively. Like cfoF, the dehydratase cfoI also plays a role in the hydroxylation of position C3. Methyltransferases cfoB, cfoC, and cfoD then catalyze the methylation of C7-OH, C8-OH, and C3-OH, respectively. Finally, the monooxygenase cfoE is responsible for the chlorination of flavonoid at position C3' (PubMed:36704842).</text>
</comment>
<comment type="pathway">
    <text evidence="2">Secondary metabolite biosynthesis; flavonoid biosynthesis.</text>
</comment>
<comment type="disruption phenotype">
    <text evidence="2">Impairs methylation of the flavonoid skeleton at position C8-OH.</text>
</comment>
<comment type="similarity">
    <text evidence="4">Belongs to the class I-like SAM-binding methyltransferase superfamily. Cation-independent O-methyltransferase family.</text>
</comment>
<dbReference type="EC" id="2.1.1.-" evidence="2"/>
<dbReference type="EMBL" id="KZ559171">
    <property type="protein sequence ID" value="PLB34860.1"/>
    <property type="molecule type" value="Genomic_DNA"/>
</dbReference>
<dbReference type="SMR" id="A0A2I2F2K7"/>
<dbReference type="OrthoDB" id="1535081at2759"/>
<dbReference type="UniPathway" id="UPA00154"/>
<dbReference type="Proteomes" id="UP000234585">
    <property type="component" value="Unassembled WGS sequence"/>
</dbReference>
<dbReference type="GO" id="GO:0008171">
    <property type="term" value="F:O-methyltransferase activity"/>
    <property type="evidence" value="ECO:0007669"/>
    <property type="project" value="InterPro"/>
</dbReference>
<dbReference type="GO" id="GO:0046983">
    <property type="term" value="F:protein dimerization activity"/>
    <property type="evidence" value="ECO:0007669"/>
    <property type="project" value="InterPro"/>
</dbReference>
<dbReference type="GO" id="GO:0009813">
    <property type="term" value="P:flavonoid biosynthetic process"/>
    <property type="evidence" value="ECO:0007669"/>
    <property type="project" value="UniProtKB-UniPathway"/>
</dbReference>
<dbReference type="GO" id="GO:0032259">
    <property type="term" value="P:methylation"/>
    <property type="evidence" value="ECO:0007669"/>
    <property type="project" value="UniProtKB-KW"/>
</dbReference>
<dbReference type="GO" id="GO:0044550">
    <property type="term" value="P:secondary metabolite biosynthetic process"/>
    <property type="evidence" value="ECO:0007669"/>
    <property type="project" value="UniProtKB-ARBA"/>
</dbReference>
<dbReference type="Gene3D" id="3.40.50.150">
    <property type="entry name" value="Vaccinia Virus protein VP39"/>
    <property type="match status" value="1"/>
</dbReference>
<dbReference type="Gene3D" id="1.10.10.10">
    <property type="entry name" value="Winged helix-like DNA-binding domain superfamily/Winged helix DNA-binding domain"/>
    <property type="match status" value="1"/>
</dbReference>
<dbReference type="InterPro" id="IPR016461">
    <property type="entry name" value="COMT-like"/>
</dbReference>
<dbReference type="InterPro" id="IPR001077">
    <property type="entry name" value="O_MeTrfase_dom"/>
</dbReference>
<dbReference type="InterPro" id="IPR012967">
    <property type="entry name" value="Plant_O-MeTrfase_dimerisation"/>
</dbReference>
<dbReference type="InterPro" id="IPR029063">
    <property type="entry name" value="SAM-dependent_MTases_sf"/>
</dbReference>
<dbReference type="InterPro" id="IPR036388">
    <property type="entry name" value="WH-like_DNA-bd_sf"/>
</dbReference>
<dbReference type="InterPro" id="IPR036390">
    <property type="entry name" value="WH_DNA-bd_sf"/>
</dbReference>
<dbReference type="PANTHER" id="PTHR43712:SF1">
    <property type="entry name" value="HYPOTHETICAL O-METHYLTRANSFERASE (EUROFUNG)-RELATED"/>
    <property type="match status" value="1"/>
</dbReference>
<dbReference type="PANTHER" id="PTHR43712">
    <property type="entry name" value="PUTATIVE (AFU_ORTHOLOGUE AFUA_4G14580)-RELATED"/>
    <property type="match status" value="1"/>
</dbReference>
<dbReference type="Pfam" id="PF08100">
    <property type="entry name" value="Dimerisation"/>
    <property type="match status" value="1"/>
</dbReference>
<dbReference type="Pfam" id="PF00891">
    <property type="entry name" value="Methyltransf_2"/>
    <property type="match status" value="1"/>
</dbReference>
<dbReference type="PIRSF" id="PIRSF005739">
    <property type="entry name" value="O-mtase"/>
    <property type="match status" value="1"/>
</dbReference>
<dbReference type="SUPFAM" id="SSF53335">
    <property type="entry name" value="S-adenosyl-L-methionine-dependent methyltransferases"/>
    <property type="match status" value="1"/>
</dbReference>
<dbReference type="SUPFAM" id="SSF46785">
    <property type="entry name" value="Winged helix' DNA-binding domain"/>
    <property type="match status" value="1"/>
</dbReference>
<dbReference type="PROSITE" id="PS51683">
    <property type="entry name" value="SAM_OMT_II"/>
    <property type="match status" value="1"/>
</dbReference>
<organism>
    <name type="scientific">Aspergillus candidus</name>
    <dbReference type="NCBI Taxonomy" id="41067"/>
    <lineage>
        <taxon>Eukaryota</taxon>
        <taxon>Fungi</taxon>
        <taxon>Dikarya</taxon>
        <taxon>Ascomycota</taxon>
        <taxon>Pezizomycotina</taxon>
        <taxon>Eurotiomycetes</taxon>
        <taxon>Eurotiomycetidae</taxon>
        <taxon>Eurotiales</taxon>
        <taxon>Aspergillaceae</taxon>
        <taxon>Aspergillus</taxon>
        <taxon>Aspergillus subgen. Circumdati</taxon>
    </lineage>
</organism>